<proteinExistence type="inferred from homology"/>
<organism>
    <name type="scientific">Yersinia pseudotuberculosis serotype O:1b (strain IP 31758)</name>
    <dbReference type="NCBI Taxonomy" id="349747"/>
    <lineage>
        <taxon>Bacteria</taxon>
        <taxon>Pseudomonadati</taxon>
        <taxon>Pseudomonadota</taxon>
        <taxon>Gammaproteobacteria</taxon>
        <taxon>Enterobacterales</taxon>
        <taxon>Yersiniaceae</taxon>
        <taxon>Yersinia</taxon>
    </lineage>
</organism>
<name>MUTH_YERP3</name>
<accession>A7FFD6</accession>
<feature type="chain" id="PRO_1000062206" description="DNA mismatch repair protein MutH">
    <location>
        <begin position="1"/>
        <end position="228"/>
    </location>
</feature>
<evidence type="ECO:0000255" key="1">
    <source>
        <dbReference type="HAMAP-Rule" id="MF_00759"/>
    </source>
</evidence>
<comment type="function">
    <text evidence="1">Sequence-specific endonuclease that cleaves unmethylated GATC sequences. It is involved in DNA mismatch repair.</text>
</comment>
<comment type="subcellular location">
    <subcellularLocation>
        <location evidence="1">Cytoplasm</location>
    </subcellularLocation>
</comment>
<comment type="similarity">
    <text evidence="1">Belongs to the MutH family.</text>
</comment>
<reference key="1">
    <citation type="journal article" date="2007" name="PLoS Genet.">
        <title>The complete genome sequence of Yersinia pseudotuberculosis IP31758, the causative agent of Far East scarlet-like fever.</title>
        <authorList>
            <person name="Eppinger M."/>
            <person name="Rosovitz M.J."/>
            <person name="Fricke W.F."/>
            <person name="Rasko D.A."/>
            <person name="Kokorina G."/>
            <person name="Fayolle C."/>
            <person name="Lindler L.E."/>
            <person name="Carniel E."/>
            <person name="Ravel J."/>
        </authorList>
    </citation>
    <scope>NUCLEOTIDE SEQUENCE [LARGE SCALE GENOMIC DNA]</scope>
    <source>
        <strain>IP 31758</strain>
    </source>
</reference>
<gene>
    <name evidence="1" type="primary">mutH</name>
    <name type="ordered locus">YpsIP31758_0980</name>
</gene>
<dbReference type="EMBL" id="CP000720">
    <property type="protein sequence ID" value="ABS46433.1"/>
    <property type="molecule type" value="Genomic_DNA"/>
</dbReference>
<dbReference type="RefSeq" id="WP_002209838.1">
    <property type="nucleotide sequence ID" value="NC_009708.1"/>
</dbReference>
<dbReference type="SMR" id="A7FFD6"/>
<dbReference type="GeneID" id="57973847"/>
<dbReference type="KEGG" id="ypi:YpsIP31758_0980"/>
<dbReference type="HOGENOM" id="CLU_086669_0_0_6"/>
<dbReference type="Proteomes" id="UP000002412">
    <property type="component" value="Chromosome"/>
</dbReference>
<dbReference type="GO" id="GO:0005737">
    <property type="term" value="C:cytoplasm"/>
    <property type="evidence" value="ECO:0007669"/>
    <property type="project" value="UniProtKB-SubCell"/>
</dbReference>
<dbReference type="GO" id="GO:0003677">
    <property type="term" value="F:DNA binding"/>
    <property type="evidence" value="ECO:0007669"/>
    <property type="project" value="InterPro"/>
</dbReference>
<dbReference type="GO" id="GO:0004519">
    <property type="term" value="F:endonuclease activity"/>
    <property type="evidence" value="ECO:0007669"/>
    <property type="project" value="UniProtKB-UniRule"/>
</dbReference>
<dbReference type="GO" id="GO:0006304">
    <property type="term" value="P:DNA modification"/>
    <property type="evidence" value="ECO:0007669"/>
    <property type="project" value="InterPro"/>
</dbReference>
<dbReference type="GO" id="GO:0006298">
    <property type="term" value="P:mismatch repair"/>
    <property type="evidence" value="ECO:0007669"/>
    <property type="project" value="UniProtKB-UniRule"/>
</dbReference>
<dbReference type="CDD" id="cd00583">
    <property type="entry name" value="MutH-like"/>
    <property type="match status" value="1"/>
</dbReference>
<dbReference type="FunFam" id="3.40.600.10:FF:000001">
    <property type="entry name" value="DNA mismatch repair protein MutH"/>
    <property type="match status" value="1"/>
</dbReference>
<dbReference type="Gene3D" id="3.40.600.10">
    <property type="entry name" value="DNA mismatch repair MutH/Restriction endonuclease, type II"/>
    <property type="match status" value="1"/>
</dbReference>
<dbReference type="HAMAP" id="MF_00759">
    <property type="entry name" value="MutH"/>
    <property type="match status" value="1"/>
</dbReference>
<dbReference type="InterPro" id="IPR004230">
    <property type="entry name" value="DNA_mismatch_repair_MutH"/>
</dbReference>
<dbReference type="InterPro" id="IPR011337">
    <property type="entry name" value="DNA_rep_MutH/RE_typeII_Sau3AI"/>
</dbReference>
<dbReference type="InterPro" id="IPR037057">
    <property type="entry name" value="DNA_rep_MutH/T2_RE_sf"/>
</dbReference>
<dbReference type="InterPro" id="IPR011335">
    <property type="entry name" value="Restrct_endonuc-II-like"/>
</dbReference>
<dbReference type="NCBIfam" id="TIGR02248">
    <property type="entry name" value="mutH_TIGR"/>
    <property type="match status" value="1"/>
</dbReference>
<dbReference type="NCBIfam" id="NF003458">
    <property type="entry name" value="PRK05070.1"/>
    <property type="match status" value="1"/>
</dbReference>
<dbReference type="Pfam" id="PF02976">
    <property type="entry name" value="MutH"/>
    <property type="match status" value="1"/>
</dbReference>
<dbReference type="SMART" id="SM00927">
    <property type="entry name" value="MutH"/>
    <property type="match status" value="1"/>
</dbReference>
<dbReference type="SUPFAM" id="SSF52980">
    <property type="entry name" value="Restriction endonuclease-like"/>
    <property type="match status" value="1"/>
</dbReference>
<keyword id="KW-0963">Cytoplasm</keyword>
<keyword id="KW-0227">DNA damage</keyword>
<keyword id="KW-0234">DNA repair</keyword>
<keyword id="KW-0255">Endonuclease</keyword>
<keyword id="KW-0378">Hydrolase</keyword>
<keyword id="KW-0540">Nuclease</keyword>
<protein>
    <recommendedName>
        <fullName evidence="1">DNA mismatch repair protein MutH</fullName>
    </recommendedName>
    <alternativeName>
        <fullName evidence="1">Methyl-directed mismatch repair protein</fullName>
    </alternativeName>
</protein>
<sequence>MSVYSLPPAPPSDEHQLFQRAQALSGFTLGELATRAQWVIPADLKRVKGWVGMLLEFYLGASAGSKPEQDFADIGIELKTIPISAQGKPLETTFVCVAPLTGNSGVTWESSHVRHKLARVLWVPVEGERHIPLAERRVGAPLLWSPNVEEEELLRRDWEELMDLIVLGKVESITARHGQVLQLRPKAANSRALTEAIGEFGQPIMTLPRGFYLKKTLTAPMLARHFLL</sequence>